<comment type="function">
    <text evidence="1">Assembles to form an icosahedral capsid with a T=7 symmetry. The icosahedral capsid is about 60 nm in diameter and composed of 415 major capsid proteins. The assembly is primed by the interaction between capsid assembly protease and portal dodecamer, and major capsid proteins assemble cooperatively to form the procapsid with the help of capsid scaffolding protein. Major capsid protein forms hexons and pentons of the icosahedron. Viral genomic DNA is packaged into the procapsid through the portal vertex. The packaging triggers a dramatic reconfiguration of the capsid shell.</text>
</comment>
<comment type="subunit">
    <text evidence="2">Homomultimer.</text>
</comment>
<comment type="subcellular location">
    <subcellularLocation>
        <location evidence="2">Virion</location>
    </subcellularLocation>
    <subcellularLocation>
        <location evidence="2">Host cytoplasm</location>
    </subcellularLocation>
    <text evidence="2">Forms the capsid icosahedric shell.</text>
</comment>
<comment type="similarity">
    <text evidence="2">Belongs to the lambda phage major capsid protein family.</text>
</comment>
<proteinExistence type="inferred from homology"/>
<name>CAPSD_BPN15</name>
<organismHost>
    <name type="scientific">Escherichia coli</name>
    <dbReference type="NCBI Taxonomy" id="562"/>
</organismHost>
<feature type="chain" id="PRO_0000432353" description="Major capsid protein">
    <location>
        <begin position="1"/>
        <end position="341"/>
    </location>
</feature>
<feature type="coiled-coil region" evidence="2">
    <location>
        <begin position="109"/>
        <end position="129"/>
    </location>
</feature>
<sequence>MSVYTTAQLLAVNEKKFKFDPLFLRIFFRETYPFSTEKVYLSQIPGLVNMALYVSPIVSGKVIRSRGGSTSEFTPGYVKPKHEVNPLMTLRRLPDEDPQNLADPVYRRRRIILQNMKDEELAIAQVEEKQAVAAVLSGKYTMTGEAFEPVEVDMGRSAGNNIVQAGAAAWSSRDKETYDPTDDIEAYALNASGVVNIIVFDPKGWALFRSFKAVKEKLDTRRGSNSELETALKDLGKAVSYKGMYGDVAIVVYSGQYIENDVKKNYLPDLTMVLGNTQARGLRTYGCILDADAQREGINASTRYPKNWVQTGDPAREFTMIQSAPLMLLADPDEFVSVKLA</sequence>
<gene>
    <name evidence="4" type="primary">gene 8</name>
</gene>
<protein>
    <recommendedName>
        <fullName evidence="2">Major capsid protein</fullName>
    </recommendedName>
    <alternativeName>
        <fullName evidence="3">Gene product 8</fullName>
    </alternativeName>
    <alternativeName>
        <fullName evidence="2">Major head protein</fullName>
    </alternativeName>
</protein>
<reference key="1">
    <citation type="journal article" date="2000" name="J. Mol. Biol.">
        <title>Genomic sequence and analysis of the atypical temperate bacteriophage N15.</title>
        <authorList>
            <person name="Ravin V."/>
            <person name="Ravin N."/>
            <person name="Casjens S."/>
            <person name="Ford M.E."/>
            <person name="Hatfull G.F."/>
            <person name="Hendrix R.W."/>
        </authorList>
    </citation>
    <scope>NUCLEOTIDE SEQUENCE [LARGE SCALE GENOMIC DNA]</scope>
    <scope>IDENTIFICATION</scope>
</reference>
<organism evidence="5">
    <name type="scientific">Escherichia phage N15</name>
    <name type="common">Bacteriophage N15</name>
    <dbReference type="NCBI Taxonomy" id="1604876"/>
    <lineage>
        <taxon>Viruses</taxon>
        <taxon>Duplodnaviria</taxon>
        <taxon>Heunggongvirae</taxon>
        <taxon>Uroviricota</taxon>
        <taxon>Caudoviricetes</taxon>
        <taxon>Ravinvirus</taxon>
        <taxon>Ravinvirus N15</taxon>
    </lineage>
</organism>
<dbReference type="EMBL" id="AF064539">
    <property type="protein sequence ID" value="AAC19044.1"/>
    <property type="molecule type" value="Genomic_DNA"/>
</dbReference>
<dbReference type="PIR" id="T13094">
    <property type="entry name" value="T13094"/>
</dbReference>
<dbReference type="RefSeq" id="NP_046903.1">
    <property type="nucleotide sequence ID" value="NC_001901.1"/>
</dbReference>
<dbReference type="SMR" id="O64322"/>
<dbReference type="GeneID" id="1261647"/>
<dbReference type="KEGG" id="vg:1261647"/>
<dbReference type="Proteomes" id="UP000002132">
    <property type="component" value="Genome"/>
</dbReference>
<dbReference type="GO" id="GO:0030430">
    <property type="term" value="C:host cell cytoplasm"/>
    <property type="evidence" value="ECO:0007669"/>
    <property type="project" value="UniProtKB-SubCell"/>
</dbReference>
<dbReference type="GO" id="GO:0019028">
    <property type="term" value="C:viral capsid"/>
    <property type="evidence" value="ECO:0007669"/>
    <property type="project" value="UniProtKB-UniRule"/>
</dbReference>
<dbReference type="Gene3D" id="3.30.1930.10">
    <property type="entry name" value="capsid protein of prophage domain"/>
    <property type="match status" value="1"/>
</dbReference>
<dbReference type="Gene3D" id="3.15.30.10">
    <property type="entry name" value="putative capsid protein of prophage domain like"/>
    <property type="match status" value="1"/>
</dbReference>
<dbReference type="HAMAP" id="MF_04133">
    <property type="entry name" value="CAPSID_LAMBDA"/>
    <property type="match status" value="1"/>
</dbReference>
<dbReference type="InterPro" id="IPR005564">
    <property type="entry name" value="Major_capsid_GpE"/>
</dbReference>
<dbReference type="Pfam" id="PF03864">
    <property type="entry name" value="Phage_cap_E"/>
    <property type="match status" value="1"/>
</dbReference>
<keyword id="KW-0167">Capsid protein</keyword>
<keyword id="KW-0175">Coiled coil</keyword>
<keyword id="KW-1035">Host cytoplasm</keyword>
<keyword id="KW-0426">Late protein</keyword>
<keyword id="KW-1185">Reference proteome</keyword>
<keyword id="KW-0946">Virion</keyword>
<evidence type="ECO:0000250" key="1">
    <source>
        <dbReference type="UniProtKB" id="P03713"/>
    </source>
</evidence>
<evidence type="ECO:0000255" key="2">
    <source>
        <dbReference type="HAMAP-Rule" id="MF_04133"/>
    </source>
</evidence>
<evidence type="ECO:0000305" key="3"/>
<evidence type="ECO:0000312" key="4">
    <source>
        <dbReference type="EMBL" id="AAC19044.1"/>
    </source>
</evidence>
<evidence type="ECO:0000312" key="5">
    <source>
        <dbReference type="Proteomes" id="UP000002132"/>
    </source>
</evidence>
<accession>O64322</accession>